<gene>
    <name type="primary">Slc10a6</name>
    <name type="synonym">Soat</name>
</gene>
<feature type="chain" id="PRO_0000309217" description="Sodium-dependent organic anion transporter">
    <location>
        <begin position="1"/>
        <end position="370"/>
    </location>
</feature>
<feature type="topological domain" description="Extracellular" evidence="4">
    <location>
        <begin position="1"/>
        <end position="32"/>
    </location>
</feature>
<feature type="transmembrane region" description="Helical" evidence="4">
    <location>
        <begin position="33"/>
        <end position="53"/>
    </location>
</feature>
<feature type="topological domain" description="Cytoplasmic" evidence="4">
    <location>
        <begin position="54"/>
        <end position="67"/>
    </location>
</feature>
<feature type="transmembrane region" description="Helical" evidence="4">
    <location>
        <begin position="68"/>
        <end position="88"/>
    </location>
</feature>
<feature type="topological domain" description="Extracellular" evidence="4">
    <location>
        <begin position="89"/>
        <end position="97"/>
    </location>
</feature>
<feature type="transmembrane region" description="Helical" evidence="4">
    <location>
        <begin position="98"/>
        <end position="118"/>
    </location>
</feature>
<feature type="topological domain" description="Cytoplasmic" evidence="4">
    <location>
        <begin position="119"/>
        <end position="126"/>
    </location>
</feature>
<feature type="transmembrane region" description="Helical" evidence="4">
    <location>
        <begin position="127"/>
        <end position="147"/>
    </location>
</feature>
<feature type="topological domain" description="Extracellular" evidence="4">
    <location>
        <begin position="148"/>
        <end position="159"/>
    </location>
</feature>
<feature type="transmembrane region" description="Helical" evidence="4">
    <location>
        <begin position="160"/>
        <end position="180"/>
    </location>
</feature>
<feature type="topological domain" description="Cytoplasmic" evidence="4">
    <location>
        <begin position="181"/>
        <end position="195"/>
    </location>
</feature>
<feature type="transmembrane region" description="Helical" evidence="4">
    <location>
        <begin position="196"/>
        <end position="216"/>
    </location>
</feature>
<feature type="topological domain" description="Extracellular" evidence="4">
    <location>
        <begin position="217"/>
        <end position="224"/>
    </location>
</feature>
<feature type="transmembrane region" description="Helical" evidence="4">
    <location>
        <begin position="225"/>
        <end position="245"/>
    </location>
</feature>
<feature type="topological domain" description="Cytoplasmic" evidence="4">
    <location>
        <begin position="246"/>
        <end position="265"/>
    </location>
</feature>
<feature type="transmembrane region" description="Helical" evidence="4">
    <location>
        <begin position="266"/>
        <end position="283"/>
    </location>
</feature>
<feature type="topological domain" description="Extracellular" evidence="4">
    <location>
        <position position="284"/>
    </location>
</feature>
<feature type="transmembrane region" description="Helical" evidence="4">
    <location>
        <begin position="285"/>
        <end position="305"/>
    </location>
</feature>
<feature type="topological domain" description="Cytoplasmic" evidence="4">
    <location>
        <begin position="306"/>
        <end position="370"/>
    </location>
</feature>
<feature type="region of interest" description="Disordered" evidence="5">
    <location>
        <begin position="1"/>
        <end position="24"/>
    </location>
</feature>
<feature type="glycosylation site" description="N-linked (GlcNAc...) asparagine" evidence="4">
    <location>
        <position position="8"/>
    </location>
</feature>
<feature type="glycosylation site" description="N-linked (GlcNAc...) asparagine" evidence="4">
    <location>
        <position position="14"/>
    </location>
</feature>
<protein>
    <recommendedName>
        <fullName evidence="7">Sodium-dependent organic anion transporter</fullName>
        <shortName evidence="7">Soat</shortName>
    </recommendedName>
    <alternativeName>
        <fullName>Solute carrier family 10 member 6</fullName>
        <shortName>SLC10A6</shortName>
    </alternativeName>
</protein>
<accession>Q70EX6</accession>
<evidence type="ECO:0000250" key="1"/>
<evidence type="ECO:0000250" key="2">
    <source>
        <dbReference type="UniProtKB" id="Q3KNW5"/>
    </source>
</evidence>
<evidence type="ECO:0000250" key="3">
    <source>
        <dbReference type="UniProtKB" id="Q9CXB2"/>
    </source>
</evidence>
<evidence type="ECO:0000255" key="4"/>
<evidence type="ECO:0000256" key="5">
    <source>
        <dbReference type="SAM" id="MobiDB-lite"/>
    </source>
</evidence>
<evidence type="ECO:0000269" key="6">
    <source>
    </source>
</evidence>
<evidence type="ECO:0000303" key="7">
    <source>
    </source>
</evidence>
<evidence type="ECO:0000305" key="8"/>
<proteinExistence type="evidence at protein level"/>
<name>SOAT_RAT</name>
<sequence length="370" mass="40310">MSADCEGNSTCPANSTEEDPPVGMEGQGSLKLVFTVLSAVMVGLVMFSFGCSVESRKLWLHLRRPWGIAVGLLCQFGLMPLTAYLLAIGFGLKPFQAIAVLIMGSCPGGTVSNVLTFWVDGDMDLSISMTTCSTVAALGMMPLCLYVYTRSWTLPQSLTIPYQSIGITLVSLVVPVASGIYVNYRWPKQATFILKVGAAVGGMLLLVVAVTGVVLAKGWNIDVTLLVISCIFPLVGHVMGFLLAFLTHQSWQRCRTISIETGAQNIQLCIAMMQLSFSAEYLVQLLNFALAYGLFQVLHGLLIVAAYQAYKRRQKSQYRRQHPECQDISSEKQPRETSAFLDKGAEAAVTLGLEQHHRTAELTSHVPSCE</sequence>
<comment type="function">
    <text evidence="2 3 6">Transports sulfoconjugated steroid hormones from the extracellular compartment into the cytosol in a sodium-dependent manner without hydrolysis (PubMed:15020217). Steroid sulfate hormones are commonly considered to be biologically inactive metabolites, that may be activated by steroid sulfatases into free steroids (By similarity). May play an important role by delivering sulfoconjugated steroids to specific target cells in reproductive organs (By similarity). May play a role transporting the estriol precursor 16alpha-hydroxydehydroepiandrosterone 3-sulfate (16a-OH-DHEAS) at the fetal blood vessel endothelium (By similarity). Can also transport other sulfoconjugated molecules such as taurolithocholic acid-3-sulfate and sulfoconjugated pyrenes (By similarity).</text>
</comment>
<comment type="catalytic activity">
    <reaction evidence="6">
        <text>estrone 3-sulfate(out) + 2 Na(+)(out) = estrone 3-sulfate(in) + 2 Na(+)(in)</text>
        <dbReference type="Rhea" id="RHEA:71083"/>
        <dbReference type="ChEBI" id="CHEBI:29101"/>
        <dbReference type="ChEBI" id="CHEBI:60050"/>
    </reaction>
</comment>
<comment type="catalytic activity">
    <reaction evidence="2">
        <text>17beta-estradiol 3-sulfate(out) + 2 Na(+)(out) = 17beta-estradiol 3-sulfate(in) + 2 Na(+)(in)</text>
        <dbReference type="Rhea" id="RHEA:71087"/>
        <dbReference type="ChEBI" id="CHEBI:29101"/>
        <dbReference type="ChEBI" id="CHEBI:136582"/>
    </reaction>
</comment>
<comment type="catalytic activity">
    <reaction evidence="6">
        <text>dehydroepiandrosterone 3-sulfate(out) + 2 Na(+)(out) = dehydroepiandrosterone 3-sulfate(in) + 2 Na(+)(in)</text>
        <dbReference type="Rhea" id="RHEA:71091"/>
        <dbReference type="ChEBI" id="CHEBI:29101"/>
        <dbReference type="ChEBI" id="CHEBI:57905"/>
    </reaction>
</comment>
<comment type="catalytic activity">
    <reaction evidence="2">
        <text>androst-5-ene-diol 3-sulfate(out) + 2 Na(+)(out) = androst-5-ene-diol 3-sulfate(in) + 2 Na(+)(in)</text>
        <dbReference type="Rhea" id="RHEA:71099"/>
        <dbReference type="ChEBI" id="CHEBI:29101"/>
        <dbReference type="ChEBI" id="CHEBI:190287"/>
    </reaction>
</comment>
<comment type="catalytic activity">
    <reaction evidence="2">
        <text>pregnenolone sulfate(out) + 2 Na(+)(out) = pregnenolone sulfate(in) + 2 Na(+)(in)</text>
        <dbReference type="Rhea" id="RHEA:71095"/>
        <dbReference type="ChEBI" id="CHEBI:29101"/>
        <dbReference type="ChEBI" id="CHEBI:133000"/>
    </reaction>
</comment>
<comment type="catalytic activity">
    <reaction evidence="2">
        <text>taurolithocholate 3-sulfate(out) + 2 Na(+)(out) = taurolithocholate 3-sulfate(in) + 2 Na(+)(in)</text>
        <dbReference type="Rhea" id="RHEA:71275"/>
        <dbReference type="ChEBI" id="CHEBI:29101"/>
        <dbReference type="ChEBI" id="CHEBI:58301"/>
    </reaction>
</comment>
<comment type="catalytic activity">
    <reaction evidence="2">
        <text>androsterone 3alpha-sulfate(out) + 2 Na(+)(out) = androsterone 3alpha-sulfate(in) + 2 Na(+)(in)</text>
        <dbReference type="Rhea" id="RHEA:71351"/>
        <dbReference type="ChEBI" id="CHEBI:29101"/>
        <dbReference type="ChEBI" id="CHEBI:133003"/>
    </reaction>
</comment>
<comment type="catalytic activity">
    <reaction evidence="2">
        <text>5alpha-dihydrotestosterone sulfate(out) + 2 Na(+)(out) = 5alpha-dihydrotestosterone sulfate(in) + 2 Na(+)(in)</text>
        <dbReference type="Rhea" id="RHEA:71355"/>
        <dbReference type="ChEBI" id="CHEBI:29101"/>
        <dbReference type="ChEBI" id="CHEBI:136982"/>
    </reaction>
</comment>
<comment type="catalytic activity">
    <reaction evidence="2">
        <text>17beta-estradiol 17-sulfate(out) + 2 Na(+)(out) = 17beta-estradiol 17-sulfate(in) + 2 Na(+)(in)</text>
        <dbReference type="Rhea" id="RHEA:71359"/>
        <dbReference type="ChEBI" id="CHEBI:29101"/>
        <dbReference type="ChEBI" id="CHEBI:190469"/>
    </reaction>
</comment>
<comment type="catalytic activity">
    <reaction evidence="2">
        <text>17alpha-hydroxypregnenolone 3-sulfate(out) + 2 Na(+)(out) = 17alpha-hydroxypregnenolone 3-sulfate(in) + 2 Na(+)(in)</text>
        <dbReference type="Rhea" id="RHEA:71363"/>
        <dbReference type="ChEBI" id="CHEBI:29101"/>
        <dbReference type="ChEBI" id="CHEBI:133742"/>
    </reaction>
</comment>
<comment type="catalytic activity">
    <reaction evidence="2">
        <text>epiandrosterone 3-sulfate(out) + 2 Na(+)(out) = epiandrosterone 3-sulfate(in) + 2 Na(+)(in)</text>
        <dbReference type="Rhea" id="RHEA:71367"/>
        <dbReference type="ChEBI" id="CHEBI:29101"/>
        <dbReference type="ChEBI" id="CHEBI:133729"/>
    </reaction>
</comment>
<comment type="catalytic activity">
    <reaction evidence="2">
        <text>epitestosterone 17-sulfate(out) + 2 Na(+)(out) = epitestosterone 17-sulfate(in) + 2 Na(+)(in)</text>
        <dbReference type="Rhea" id="RHEA:71371"/>
        <dbReference type="ChEBI" id="CHEBI:29101"/>
        <dbReference type="ChEBI" id="CHEBI:190485"/>
    </reaction>
</comment>
<comment type="catalytic activity">
    <reaction evidence="2">
        <text>testosterone 17-sulfate(out) + 2 Na(+)(out) = testosterone 17-sulfate(in) + 2 Na(+)(in)</text>
        <dbReference type="Rhea" id="RHEA:71375"/>
        <dbReference type="ChEBI" id="CHEBI:29101"/>
        <dbReference type="ChEBI" id="CHEBI:190489"/>
    </reaction>
</comment>
<comment type="catalytic activity">
    <reaction evidence="2">
        <text>16alpha-hydroxydehydroepiandrosterone 3-sulfate(out) + 2 Na(+)(out) = 16alpha-hydroxydehydroepiandrosterone 3-sulfate(in) + 2 Na(+)(in)</text>
        <dbReference type="Rhea" id="RHEA:71391"/>
        <dbReference type="ChEBI" id="CHEBI:29101"/>
        <dbReference type="ChEBI" id="CHEBI:87538"/>
    </reaction>
</comment>
<comment type="biophysicochemical properties">
    <kinetics>
        <KM evidence="6">31 uM for estrone 3-sulfate (E1S)</KM>
        <KM evidence="6">30 uM for dehydroepiandrosterone 3-sulfate (DHEAS)</KM>
    </kinetics>
</comment>
<comment type="subcellular location">
    <subcellularLocation>
        <location evidence="8">Membrane</location>
        <topology evidence="8">Multi-pass membrane protein</topology>
    </subcellularLocation>
</comment>
<comment type="tissue specificity">
    <text evidence="6">Highly expressed in heart, lung, spleen and adrenal gland. Moderately expressed in skeletal muscle, testis and small intestine.</text>
</comment>
<comment type="PTM">
    <text evidence="1">Glycosylated.</text>
</comment>
<comment type="miscellaneous">
    <text evidence="3">In humans, 3-beta-sulfooxy-androst-5-en-17-one (DHEAS) is the most abundant circulating steroid sulfate in the human body, it is mainly synthesized from adrenal glands and gonads, whereas rats and mice have low circulating concentrations of DHEAS in the periphery as they can only produce DHEAS in their gonads.</text>
</comment>
<comment type="similarity">
    <text evidence="8">Belongs to the bile acid:sodium symporter (BASS) (TC 2.A.28) family.</text>
</comment>
<dbReference type="EMBL" id="AJ583503">
    <property type="protein sequence ID" value="CAE47478.1"/>
    <property type="molecule type" value="mRNA"/>
</dbReference>
<dbReference type="RefSeq" id="NP_932166.1">
    <property type="nucleotide sequence ID" value="NM_198049.2"/>
</dbReference>
<dbReference type="SMR" id="Q70EX6"/>
<dbReference type="FunCoup" id="Q70EX6">
    <property type="interactions" value="56"/>
</dbReference>
<dbReference type="STRING" id="10116.ENSRNOP00000002819"/>
<dbReference type="TCDB" id="2.A.28.1.3">
    <property type="family name" value="the bile acid:na(+) symporter (bass) family"/>
</dbReference>
<dbReference type="GlyCosmos" id="Q70EX6">
    <property type="glycosylation" value="2 sites, No reported glycans"/>
</dbReference>
<dbReference type="GlyGen" id="Q70EX6">
    <property type="glycosylation" value="2 sites"/>
</dbReference>
<dbReference type="PaxDb" id="10116-ENSRNOP00000002819"/>
<dbReference type="Ensembl" id="ENSRNOT00000088508.2">
    <property type="protein sequence ID" value="ENSRNOP00000072386.1"/>
    <property type="gene ID" value="ENSRNOG00000002057.4"/>
</dbReference>
<dbReference type="GeneID" id="289459"/>
<dbReference type="KEGG" id="rno:289459"/>
<dbReference type="AGR" id="RGD:727800"/>
<dbReference type="CTD" id="345274"/>
<dbReference type="RGD" id="727800">
    <property type="gene designation" value="Slc10a6"/>
</dbReference>
<dbReference type="eggNOG" id="KOG2718">
    <property type="taxonomic scope" value="Eukaryota"/>
</dbReference>
<dbReference type="GeneTree" id="ENSGT00950000182808"/>
<dbReference type="HOGENOM" id="CLU_034788_7_5_1"/>
<dbReference type="InParanoid" id="Q70EX6"/>
<dbReference type="OMA" id="CLYLYTW"/>
<dbReference type="OrthoDB" id="69811at9989"/>
<dbReference type="PhylomeDB" id="Q70EX6"/>
<dbReference type="TreeFam" id="TF315811"/>
<dbReference type="Reactome" id="R-RNO-425366">
    <property type="pathway name" value="Transport of bile salts and organic acids, metal ions and amine compounds"/>
</dbReference>
<dbReference type="PRO" id="PR:Q70EX6"/>
<dbReference type="Proteomes" id="UP000002494">
    <property type="component" value="Chromosome 14"/>
</dbReference>
<dbReference type="Bgee" id="ENSRNOG00000002057">
    <property type="expression patterns" value="Expressed in esophagus and 19 other cell types or tissues"/>
</dbReference>
<dbReference type="GO" id="GO:0016020">
    <property type="term" value="C:membrane"/>
    <property type="evidence" value="ECO:0007669"/>
    <property type="project" value="UniProtKB-SubCell"/>
</dbReference>
<dbReference type="GO" id="GO:0008508">
    <property type="term" value="F:bile acid:sodium symporter activity"/>
    <property type="evidence" value="ECO:0000318"/>
    <property type="project" value="GO_Central"/>
</dbReference>
<dbReference type="GO" id="GO:0043250">
    <property type="term" value="F:sodium-dependent organic anion transmembrane transporter activity"/>
    <property type="evidence" value="ECO:0000314"/>
    <property type="project" value="RGD"/>
</dbReference>
<dbReference type="GO" id="GO:0015721">
    <property type="term" value="P:bile acid and bile salt transport"/>
    <property type="evidence" value="ECO:0000318"/>
    <property type="project" value="GO_Central"/>
</dbReference>
<dbReference type="GO" id="GO:0043251">
    <property type="term" value="P:sodium-dependent organic anion transport"/>
    <property type="evidence" value="ECO:0000314"/>
    <property type="project" value="RGD"/>
</dbReference>
<dbReference type="FunFam" id="1.20.1530.20:FF:000010">
    <property type="entry name" value="Solute carrier family 10 member 6"/>
    <property type="match status" value="1"/>
</dbReference>
<dbReference type="Gene3D" id="1.20.1530.20">
    <property type="match status" value="1"/>
</dbReference>
<dbReference type="InterPro" id="IPR002657">
    <property type="entry name" value="BilAc:Na_symport/Acr3"/>
</dbReference>
<dbReference type="InterPro" id="IPR004710">
    <property type="entry name" value="Bilac:Na_transpt"/>
</dbReference>
<dbReference type="InterPro" id="IPR038770">
    <property type="entry name" value="Na+/solute_symporter_sf"/>
</dbReference>
<dbReference type="PANTHER" id="PTHR10361">
    <property type="entry name" value="SODIUM-BILE ACID COTRANSPORTER"/>
    <property type="match status" value="1"/>
</dbReference>
<dbReference type="PANTHER" id="PTHR10361:SF55">
    <property type="entry name" value="SODIUM-DEPENDENT ORGANIC ANION TRANSPORTER"/>
    <property type="match status" value="1"/>
</dbReference>
<dbReference type="Pfam" id="PF01758">
    <property type="entry name" value="SBF"/>
    <property type="match status" value="1"/>
</dbReference>
<keyword id="KW-0325">Glycoprotein</keyword>
<keyword id="KW-0406">Ion transport</keyword>
<keyword id="KW-0445">Lipid transport</keyword>
<keyword id="KW-0472">Membrane</keyword>
<keyword id="KW-1185">Reference proteome</keyword>
<keyword id="KW-0915">Sodium</keyword>
<keyword id="KW-0739">Sodium transport</keyword>
<keyword id="KW-0769">Symport</keyword>
<keyword id="KW-0812">Transmembrane</keyword>
<keyword id="KW-1133">Transmembrane helix</keyword>
<keyword id="KW-0813">Transport</keyword>
<reference key="1">
    <citation type="journal article" date="2004" name="Biochem. Biophys. Res. Commun.">
        <title>Identification of a sodium-dependent organic anion transporter from rat adrenal gland.</title>
        <authorList>
            <person name="Geyer J."/>
            <person name="Godoy J.R."/>
            <person name="Petzinger E."/>
        </authorList>
    </citation>
    <scope>NUCLEOTIDE SEQUENCE [MRNA]</scope>
    <scope>FUNCTION</scope>
    <scope>TRANSPORTER ACTIVITY</scope>
    <scope>BIOPHYSICOCHEMICAL PROPERTIES</scope>
    <scope>TISSUE SPECIFICITY</scope>
    <source>
        <strain>Wistar</strain>
        <tissue>Adrenal gland</tissue>
    </source>
</reference>
<organism>
    <name type="scientific">Rattus norvegicus</name>
    <name type="common">Rat</name>
    <dbReference type="NCBI Taxonomy" id="10116"/>
    <lineage>
        <taxon>Eukaryota</taxon>
        <taxon>Metazoa</taxon>
        <taxon>Chordata</taxon>
        <taxon>Craniata</taxon>
        <taxon>Vertebrata</taxon>
        <taxon>Euteleostomi</taxon>
        <taxon>Mammalia</taxon>
        <taxon>Eutheria</taxon>
        <taxon>Euarchontoglires</taxon>
        <taxon>Glires</taxon>
        <taxon>Rodentia</taxon>
        <taxon>Myomorpha</taxon>
        <taxon>Muroidea</taxon>
        <taxon>Muridae</taxon>
        <taxon>Murinae</taxon>
        <taxon>Rattus</taxon>
    </lineage>
</organism>